<protein>
    <recommendedName>
        <fullName>Small nuclear ribonucleoprotein G</fullName>
        <shortName>snRNP-G</shortName>
    </recommendedName>
    <alternativeName>
        <fullName>Sm protein G</fullName>
        <shortName>Sm-G</shortName>
        <shortName>SmG</shortName>
    </alternativeName>
</protein>
<keyword id="KW-0002">3D-structure</keyword>
<keyword id="KW-0963">Cytoplasm</keyword>
<keyword id="KW-0903">Direct protein sequencing</keyword>
<keyword id="KW-0507">mRNA processing</keyword>
<keyword id="KW-0508">mRNA splicing</keyword>
<keyword id="KW-0539">Nucleus</keyword>
<keyword id="KW-1185">Reference proteome</keyword>
<keyword id="KW-0687">Ribonucleoprotein</keyword>
<keyword id="KW-0694">RNA-binding</keyword>
<keyword id="KW-0747">Spliceosome</keyword>
<proteinExistence type="evidence at protein level"/>
<dbReference type="EMBL" id="M20880">
    <property type="status" value="NOT_ANNOTATED_CDS"/>
    <property type="molecule type" value="Genomic_DNA"/>
</dbReference>
<dbReference type="EMBL" id="L31794">
    <property type="protein sequence ID" value="AAB63977.1"/>
    <property type="molecule type" value="Genomic_DNA"/>
</dbReference>
<dbReference type="EMBL" id="D50617">
    <property type="status" value="NOT_ANNOTATED_CDS"/>
    <property type="molecule type" value="Genomic_DNA"/>
</dbReference>
<dbReference type="EMBL" id="Z46255">
    <property type="protein sequence ID" value="CAA86353.1"/>
    <property type="molecule type" value="Genomic_DNA"/>
</dbReference>
<dbReference type="EMBL" id="AY558463">
    <property type="protein sequence ID" value="AAS56789.1"/>
    <property type="molecule type" value="Genomic_DNA"/>
</dbReference>
<dbReference type="EMBL" id="BK006940">
    <property type="protein sequence ID" value="DAA12422.1"/>
    <property type="molecule type" value="Genomic_DNA"/>
</dbReference>
<dbReference type="PIR" id="S48322">
    <property type="entry name" value="S48322"/>
</dbReference>
<dbReference type="RefSeq" id="NP_116636.1">
    <property type="nucleotide sequence ID" value="NM_001180864.1"/>
</dbReference>
<dbReference type="PDB" id="3JCM">
    <property type="method" value="EM"/>
    <property type="resolution" value="3.80 A"/>
    <property type="chains" value="X/a=1-77"/>
</dbReference>
<dbReference type="PDB" id="5GAM">
    <property type="method" value="EM"/>
    <property type="resolution" value="3.70 A"/>
    <property type="chains" value="g=1-77"/>
</dbReference>
<dbReference type="PDB" id="5GAN">
    <property type="method" value="EM"/>
    <property type="resolution" value="3.60 A"/>
    <property type="chains" value="g/r=1-77"/>
</dbReference>
<dbReference type="PDB" id="5GAO">
    <property type="method" value="EM"/>
    <property type="resolution" value="3.60 A"/>
    <property type="chains" value="r=1-77"/>
</dbReference>
<dbReference type="PDB" id="5GM6">
    <property type="method" value="EM"/>
    <property type="resolution" value="3.50 A"/>
    <property type="chains" value="j=1-77"/>
</dbReference>
<dbReference type="PDB" id="5GMK">
    <property type="method" value="EM"/>
    <property type="resolution" value="3.40 A"/>
    <property type="chains" value="j/x=1-77"/>
</dbReference>
<dbReference type="PDB" id="5LJ3">
    <property type="method" value="EM"/>
    <property type="resolution" value="3.80 A"/>
    <property type="chains" value="g/r=1-77"/>
</dbReference>
<dbReference type="PDB" id="5LJ5">
    <property type="method" value="EM"/>
    <property type="resolution" value="3.80 A"/>
    <property type="chains" value="g/r=1-77"/>
</dbReference>
<dbReference type="PDB" id="5LQW">
    <property type="method" value="EM"/>
    <property type="resolution" value="5.80 A"/>
    <property type="chains" value="g=1-77"/>
</dbReference>
<dbReference type="PDB" id="5MPS">
    <property type="method" value="EM"/>
    <property type="resolution" value="3.85 A"/>
    <property type="chains" value="g=1-77"/>
</dbReference>
<dbReference type="PDB" id="5MQ0">
    <property type="method" value="EM"/>
    <property type="resolution" value="4.17 A"/>
    <property type="chains" value="g/r=1-77"/>
</dbReference>
<dbReference type="PDB" id="5NRL">
    <property type="method" value="EM"/>
    <property type="resolution" value="7.20 A"/>
    <property type="chains" value="g/r/y=1-77"/>
</dbReference>
<dbReference type="PDB" id="5WSG">
    <property type="method" value="EM"/>
    <property type="resolution" value="4.00 A"/>
    <property type="chains" value="K/j=1-77"/>
</dbReference>
<dbReference type="PDB" id="5Y88">
    <property type="method" value="EM"/>
    <property type="resolution" value="3.70 A"/>
    <property type="chains" value="d/k=1-77"/>
</dbReference>
<dbReference type="PDB" id="5YLZ">
    <property type="method" value="EM"/>
    <property type="resolution" value="3.60 A"/>
    <property type="chains" value="d/k=1-77"/>
</dbReference>
<dbReference type="PDB" id="5ZWM">
    <property type="method" value="EM"/>
    <property type="resolution" value="3.40 A"/>
    <property type="chains" value="V/g/k=1-77"/>
</dbReference>
<dbReference type="PDB" id="5ZWN">
    <property type="method" value="EM"/>
    <property type="resolution" value="3.30 A"/>
    <property type="chains" value="g=1-77"/>
</dbReference>
<dbReference type="PDB" id="5ZWO">
    <property type="method" value="EM"/>
    <property type="resolution" value="3.90 A"/>
    <property type="chains" value="V/g/k=1-77"/>
</dbReference>
<dbReference type="PDB" id="6BK8">
    <property type="method" value="EM"/>
    <property type="resolution" value="3.30 A"/>
    <property type="chains" value="d/n=1-77"/>
</dbReference>
<dbReference type="PDB" id="6EXN">
    <property type="method" value="EM"/>
    <property type="resolution" value="3.70 A"/>
    <property type="chains" value="g/r=1-77"/>
</dbReference>
<dbReference type="PDB" id="6G90">
    <property type="method" value="EM"/>
    <property type="resolution" value="4.00 A"/>
    <property type="chains" value="g/y=1-77"/>
</dbReference>
<dbReference type="PDB" id="6J6G">
    <property type="method" value="EM"/>
    <property type="resolution" value="3.20 A"/>
    <property type="chains" value="j/x=1-77"/>
</dbReference>
<dbReference type="PDB" id="6J6H">
    <property type="method" value="EM"/>
    <property type="resolution" value="3.60 A"/>
    <property type="chains" value="j/x=1-77"/>
</dbReference>
<dbReference type="PDB" id="6J6N">
    <property type="method" value="EM"/>
    <property type="resolution" value="3.86 A"/>
    <property type="chains" value="j/x=1-77"/>
</dbReference>
<dbReference type="PDB" id="6J6Q">
    <property type="method" value="EM"/>
    <property type="resolution" value="3.70 A"/>
    <property type="chains" value="j/x=1-77"/>
</dbReference>
<dbReference type="PDB" id="6N7P">
    <property type="method" value="EM"/>
    <property type="resolution" value="3.60 A"/>
    <property type="chains" value="Q=1-77"/>
</dbReference>
<dbReference type="PDB" id="6N7R">
    <property type="method" value="EM"/>
    <property type="resolution" value="3.20 A"/>
    <property type="chains" value="Q=1-77"/>
</dbReference>
<dbReference type="PDB" id="6N7X">
    <property type="method" value="EM"/>
    <property type="resolution" value="3.60 A"/>
    <property type="chains" value="Q=1-77"/>
</dbReference>
<dbReference type="PDB" id="7B9V">
    <property type="method" value="EM"/>
    <property type="resolution" value="2.80 A"/>
    <property type="chains" value="g/r=1-77"/>
</dbReference>
<dbReference type="PDB" id="7DCO">
    <property type="method" value="EM"/>
    <property type="resolution" value="2.50 A"/>
    <property type="chains" value="g/k=1-77"/>
</dbReference>
<dbReference type="PDB" id="7OQB">
    <property type="method" value="EM"/>
    <property type="resolution" value="9.00 A"/>
    <property type="chains" value="y=1-77"/>
</dbReference>
<dbReference type="PDB" id="7OQC">
    <property type="method" value="EM"/>
    <property type="resolution" value="4.10 A"/>
    <property type="chains" value="g=1-77"/>
</dbReference>
<dbReference type="PDB" id="7OQE">
    <property type="method" value="EM"/>
    <property type="resolution" value="5.90 A"/>
    <property type="chains" value="g/y=1-77"/>
</dbReference>
<dbReference type="PDB" id="8W2O">
    <property type="method" value="EM"/>
    <property type="resolution" value="3.49 A"/>
    <property type="chains" value="Q=1-77"/>
</dbReference>
<dbReference type="PDB" id="9DTR">
    <property type="method" value="EM"/>
    <property type="resolution" value="2.31 A"/>
    <property type="chains" value="g/r=1-77"/>
</dbReference>
<dbReference type="PDBsum" id="3JCM"/>
<dbReference type="PDBsum" id="5GAM"/>
<dbReference type="PDBsum" id="5GAN"/>
<dbReference type="PDBsum" id="5GAO"/>
<dbReference type="PDBsum" id="5GM6"/>
<dbReference type="PDBsum" id="5GMK"/>
<dbReference type="PDBsum" id="5LJ3"/>
<dbReference type="PDBsum" id="5LJ5"/>
<dbReference type="PDBsum" id="5LQW"/>
<dbReference type="PDBsum" id="5MPS"/>
<dbReference type="PDBsum" id="5MQ0"/>
<dbReference type="PDBsum" id="5NRL"/>
<dbReference type="PDBsum" id="5WSG"/>
<dbReference type="PDBsum" id="5Y88"/>
<dbReference type="PDBsum" id="5YLZ"/>
<dbReference type="PDBsum" id="5ZWM"/>
<dbReference type="PDBsum" id="5ZWN"/>
<dbReference type="PDBsum" id="5ZWO"/>
<dbReference type="PDBsum" id="6BK8"/>
<dbReference type="PDBsum" id="6EXN"/>
<dbReference type="PDBsum" id="6G90"/>
<dbReference type="PDBsum" id="6J6G"/>
<dbReference type="PDBsum" id="6J6H"/>
<dbReference type="PDBsum" id="6J6N"/>
<dbReference type="PDBsum" id="6J6Q"/>
<dbReference type="PDBsum" id="6N7P"/>
<dbReference type="PDBsum" id="6N7R"/>
<dbReference type="PDBsum" id="6N7X"/>
<dbReference type="PDBsum" id="7B9V"/>
<dbReference type="PDBsum" id="7DCO"/>
<dbReference type="PDBsum" id="7OQB"/>
<dbReference type="PDBsum" id="7OQC"/>
<dbReference type="PDBsum" id="7OQE"/>
<dbReference type="PDBsum" id="8W2O"/>
<dbReference type="PDBsum" id="9DTR"/>
<dbReference type="EMDB" id="EMD-0360"/>
<dbReference type="EMDB" id="EMD-0361"/>
<dbReference type="EMDB" id="EMD-0686"/>
<dbReference type="EMDB" id="EMD-0687"/>
<dbReference type="EMDB" id="EMD-0691"/>
<dbReference type="EMDB" id="EMD-0692"/>
<dbReference type="EMDB" id="EMD-12106"/>
<dbReference type="EMDB" id="EMD-13028"/>
<dbReference type="EMDB" id="EMD-13029"/>
<dbReference type="EMDB" id="EMD-13033"/>
<dbReference type="EMDB" id="EMD-30637"/>
<dbReference type="EMDB" id="EMD-3539"/>
<dbReference type="EMDB" id="EMD-3541"/>
<dbReference type="EMDB" id="EMD-3683"/>
<dbReference type="EMDB" id="EMD-3979"/>
<dbReference type="EMDB" id="EMD-4055"/>
<dbReference type="EMDB" id="EMD-4057"/>
<dbReference type="EMDB" id="EMD-4364"/>
<dbReference type="EMDB" id="EMD-43753"/>
<dbReference type="EMDB" id="EMD-47157"/>
<dbReference type="EMDB" id="EMD-6817"/>
<dbReference type="EMDB" id="EMD-6839"/>
<dbReference type="EMDB" id="EMD-6972"/>
<dbReference type="EMDB" id="EMD-6973"/>
<dbReference type="EMDB" id="EMD-6974"/>
<dbReference type="EMDB" id="EMD-7109"/>
<dbReference type="EMDB" id="EMD-8011"/>
<dbReference type="EMDB" id="EMD-8012"/>
<dbReference type="EMDB" id="EMD-8013"/>
<dbReference type="EMDB" id="EMD-8622"/>
<dbReference type="EMDB" id="EMD-9524"/>
<dbReference type="EMDB" id="EMD-9525"/>
<dbReference type="SMR" id="P40204"/>
<dbReference type="BioGRID" id="31129">
    <property type="interactions" value="84"/>
</dbReference>
<dbReference type="ComplexPortal" id="CPX-23">
    <property type="entry name" value="U1 small nuclear ribonucleoprotein complex"/>
</dbReference>
<dbReference type="ComplexPortal" id="CPX-25">
    <property type="entry name" value="U4/U6.U5 tri-small nuclear ribonucleoprotein complex"/>
</dbReference>
<dbReference type="ComplexPortal" id="CPX-26">
    <property type="entry name" value="U2 small nuclear ribonucleoprotein complex"/>
</dbReference>
<dbReference type="ComplexPortal" id="CPX-29">
    <property type="entry name" value="U5 small nuclear ribonucleoprotein complex"/>
</dbReference>
<dbReference type="ComplexPortal" id="CPX-30">
    <property type="entry name" value="U5 small nuclear ribonucleoprotein complex, AAR2 variant"/>
</dbReference>
<dbReference type="ComplexPortal" id="CPX-31">
    <property type="entry name" value="U4 small nuclear ribonucleoprotein complex"/>
</dbReference>
<dbReference type="ComplexPortal" id="CPX-32">
    <property type="entry name" value="U4/U6 small nuclear ribonucleoprotein complex"/>
</dbReference>
<dbReference type="ComplexPortal" id="CPX-43">
    <property type="entry name" value="Sm complex"/>
</dbReference>
<dbReference type="DIP" id="DIP-6683N"/>
<dbReference type="FunCoup" id="P40204">
    <property type="interactions" value="1027"/>
</dbReference>
<dbReference type="IntAct" id="P40204">
    <property type="interactions" value="80"/>
</dbReference>
<dbReference type="MINT" id="P40204"/>
<dbReference type="STRING" id="4932.YFL017W-A"/>
<dbReference type="iPTMnet" id="P40204"/>
<dbReference type="PaxDb" id="4932-YFL017W-A"/>
<dbReference type="PeptideAtlas" id="P40204"/>
<dbReference type="TopDownProteomics" id="P40204"/>
<dbReference type="EnsemblFungi" id="YFL017W-A_mRNA">
    <property type="protein sequence ID" value="YFL017W-A"/>
    <property type="gene ID" value="YFL017W-A"/>
</dbReference>
<dbReference type="GeneID" id="850528"/>
<dbReference type="KEGG" id="sce:YFL017W-A"/>
<dbReference type="AGR" id="SGD:S000002965"/>
<dbReference type="SGD" id="S000002965">
    <property type="gene designation" value="SMX2"/>
</dbReference>
<dbReference type="VEuPathDB" id="FungiDB:YFL017W-A"/>
<dbReference type="eggNOG" id="KOG1780">
    <property type="taxonomic scope" value="Eukaryota"/>
</dbReference>
<dbReference type="GeneTree" id="ENSGT00940000176059"/>
<dbReference type="HOGENOM" id="CLU_076902_10_1_1"/>
<dbReference type="InParanoid" id="P40204"/>
<dbReference type="OMA" id="MSKAQPP"/>
<dbReference type="OrthoDB" id="2146at2759"/>
<dbReference type="BioCyc" id="YEAST:G3O-30503-MONOMER"/>
<dbReference type="BioGRID-ORCS" id="850528">
    <property type="hits" value="2 hits in 10 CRISPR screens"/>
</dbReference>
<dbReference type="EvolutionaryTrace" id="P40204"/>
<dbReference type="PRO" id="PR:P40204"/>
<dbReference type="Proteomes" id="UP000002311">
    <property type="component" value="Chromosome VI"/>
</dbReference>
<dbReference type="RNAct" id="P40204">
    <property type="molecule type" value="protein"/>
</dbReference>
<dbReference type="GO" id="GO:0071013">
    <property type="term" value="C:catalytic step 2 spliceosome"/>
    <property type="evidence" value="ECO:0000318"/>
    <property type="project" value="GO_Central"/>
</dbReference>
<dbReference type="GO" id="GO:0000243">
    <property type="term" value="C:commitment complex"/>
    <property type="evidence" value="ECO:0000303"/>
    <property type="project" value="ComplexPortal"/>
</dbReference>
<dbReference type="GO" id="GO:0005737">
    <property type="term" value="C:cytoplasm"/>
    <property type="evidence" value="ECO:0000303"/>
    <property type="project" value="ComplexPortal"/>
</dbReference>
<dbReference type="GO" id="GO:0005634">
    <property type="term" value="C:nucleus"/>
    <property type="evidence" value="ECO:0000303"/>
    <property type="project" value="ComplexPortal"/>
</dbReference>
<dbReference type="GO" id="GO:0071011">
    <property type="term" value="C:precatalytic spliceosome"/>
    <property type="evidence" value="ECO:0000318"/>
    <property type="project" value="GO_Central"/>
</dbReference>
<dbReference type="GO" id="GO:0034719">
    <property type="term" value="C:SMN-Sm protein complex"/>
    <property type="evidence" value="ECO:0000318"/>
    <property type="project" value="GO_Central"/>
</dbReference>
<dbReference type="GO" id="GO:0005681">
    <property type="term" value="C:spliceosomal complex"/>
    <property type="evidence" value="ECO:0000303"/>
    <property type="project" value="ComplexPortal"/>
</dbReference>
<dbReference type="GO" id="GO:0097526">
    <property type="term" value="C:spliceosomal tri-snRNP complex"/>
    <property type="evidence" value="ECO:0000318"/>
    <property type="project" value="GO_Central"/>
</dbReference>
<dbReference type="GO" id="GO:0005685">
    <property type="term" value="C:U1 snRNP"/>
    <property type="evidence" value="ECO:0000314"/>
    <property type="project" value="SGD"/>
</dbReference>
<dbReference type="GO" id="GO:0005686">
    <property type="term" value="C:U2 snRNP"/>
    <property type="evidence" value="ECO:0000318"/>
    <property type="project" value="GO_Central"/>
</dbReference>
<dbReference type="GO" id="GO:0071004">
    <property type="term" value="C:U2-type prespliceosome"/>
    <property type="evidence" value="ECO:0000314"/>
    <property type="project" value="SGD"/>
</dbReference>
<dbReference type="GO" id="GO:0005687">
    <property type="term" value="C:U4 snRNP"/>
    <property type="evidence" value="ECO:0000353"/>
    <property type="project" value="ComplexPortal"/>
</dbReference>
<dbReference type="GO" id="GO:0071001">
    <property type="term" value="C:U4/U6 snRNP"/>
    <property type="evidence" value="ECO:0000303"/>
    <property type="project" value="ComplexPortal"/>
</dbReference>
<dbReference type="GO" id="GO:0046540">
    <property type="term" value="C:U4/U6 x U5 tri-snRNP complex"/>
    <property type="evidence" value="ECO:0000314"/>
    <property type="project" value="SGD"/>
</dbReference>
<dbReference type="GO" id="GO:0005682">
    <property type="term" value="C:U5 snRNP"/>
    <property type="evidence" value="ECO:0000314"/>
    <property type="project" value="SGD"/>
</dbReference>
<dbReference type="GO" id="GO:0003723">
    <property type="term" value="F:RNA binding"/>
    <property type="evidence" value="ECO:0007669"/>
    <property type="project" value="UniProtKB-KW"/>
</dbReference>
<dbReference type="GO" id="GO:0036261">
    <property type="term" value="P:7-methylguanosine cap hypermethylation"/>
    <property type="evidence" value="ECO:0000315"/>
    <property type="project" value="ComplexPortal"/>
</dbReference>
<dbReference type="GO" id="GO:0000395">
    <property type="term" value="P:mRNA 5'-splice site recognition"/>
    <property type="evidence" value="ECO:0000303"/>
    <property type="project" value="ComplexPortal"/>
</dbReference>
<dbReference type="GO" id="GO:0000398">
    <property type="term" value="P:mRNA splicing, via spliceosome"/>
    <property type="evidence" value="ECO:0000353"/>
    <property type="project" value="ComplexPortal"/>
</dbReference>
<dbReference type="GO" id="GO:0000245">
    <property type="term" value="P:spliceosomal complex assembly"/>
    <property type="evidence" value="ECO:0000303"/>
    <property type="project" value="ComplexPortal"/>
</dbReference>
<dbReference type="GO" id="GO:0000387">
    <property type="term" value="P:spliceosomal snRNP assembly"/>
    <property type="evidence" value="ECO:0000303"/>
    <property type="project" value="ComplexPortal"/>
</dbReference>
<dbReference type="GO" id="GO:1903241">
    <property type="term" value="P:U2-type prespliceosome assembly"/>
    <property type="evidence" value="ECO:0000303"/>
    <property type="project" value="ComplexPortal"/>
</dbReference>
<dbReference type="CDD" id="cd01719">
    <property type="entry name" value="Sm_G"/>
    <property type="match status" value="1"/>
</dbReference>
<dbReference type="FunFam" id="2.30.30.100:FF:000023">
    <property type="entry name" value="Small nuclear ribonucleoprotein G"/>
    <property type="match status" value="1"/>
</dbReference>
<dbReference type="Gene3D" id="2.30.30.100">
    <property type="match status" value="1"/>
</dbReference>
<dbReference type="InterPro" id="IPR044641">
    <property type="entry name" value="Lsm7/SmG-like"/>
</dbReference>
<dbReference type="InterPro" id="IPR010920">
    <property type="entry name" value="LSM_dom_sf"/>
</dbReference>
<dbReference type="InterPro" id="IPR047575">
    <property type="entry name" value="Sm"/>
</dbReference>
<dbReference type="InterPro" id="IPR001163">
    <property type="entry name" value="Sm_dom_euk/arc"/>
</dbReference>
<dbReference type="InterPro" id="IPR034098">
    <property type="entry name" value="Sm_G"/>
</dbReference>
<dbReference type="PANTHER" id="PTHR10553">
    <property type="entry name" value="SMALL NUCLEAR RIBONUCLEOPROTEIN"/>
    <property type="match status" value="1"/>
</dbReference>
<dbReference type="PANTHER" id="PTHR10553:SF2">
    <property type="entry name" value="SMALL NUCLEAR RIBONUCLEOPROTEIN G"/>
    <property type="match status" value="1"/>
</dbReference>
<dbReference type="Pfam" id="PF01423">
    <property type="entry name" value="LSM"/>
    <property type="match status" value="1"/>
</dbReference>
<dbReference type="SMART" id="SM00651">
    <property type="entry name" value="Sm"/>
    <property type="match status" value="1"/>
</dbReference>
<dbReference type="SUPFAM" id="SSF50182">
    <property type="entry name" value="Sm-like ribonucleoproteins"/>
    <property type="match status" value="1"/>
</dbReference>
<dbReference type="PROSITE" id="PS52002">
    <property type="entry name" value="SM"/>
    <property type="match status" value="1"/>
</dbReference>
<evidence type="ECO:0000250" key="1">
    <source>
        <dbReference type="UniProtKB" id="O74966"/>
    </source>
</evidence>
<evidence type="ECO:0000250" key="2">
    <source>
        <dbReference type="UniProtKB" id="P62308"/>
    </source>
</evidence>
<evidence type="ECO:0000255" key="3">
    <source>
        <dbReference type="PROSITE-ProRule" id="PRU01346"/>
    </source>
</evidence>
<evidence type="ECO:0000269" key="4">
    <source>
    </source>
</evidence>
<evidence type="ECO:0000269" key="5">
    <source>
    </source>
</evidence>
<evidence type="ECO:0000269" key="6">
    <source>
    </source>
</evidence>
<evidence type="ECO:0000269" key="7">
    <source>
    </source>
</evidence>
<evidence type="ECO:0000269" key="8">
    <source>
    </source>
</evidence>
<evidence type="ECO:0000305" key="9"/>
<evidence type="ECO:0007829" key="10">
    <source>
        <dbReference type="PDB" id="9DTR"/>
    </source>
</evidence>
<accession>P40204</accession>
<accession>D6VTL2</accession>
<organism>
    <name type="scientific">Saccharomyces cerevisiae (strain ATCC 204508 / S288c)</name>
    <name type="common">Baker's yeast</name>
    <dbReference type="NCBI Taxonomy" id="559292"/>
    <lineage>
        <taxon>Eukaryota</taxon>
        <taxon>Fungi</taxon>
        <taxon>Dikarya</taxon>
        <taxon>Ascomycota</taxon>
        <taxon>Saccharomycotina</taxon>
        <taxon>Saccharomycetes</taxon>
        <taxon>Saccharomycetales</taxon>
        <taxon>Saccharomycetaceae</taxon>
        <taxon>Saccharomyces</taxon>
    </lineage>
</organism>
<sequence length="77" mass="8482">MVSTPELKKYMDKKILLNINGSRKVAGILRGYDIFLNVVLDDAMEINGEDPANNHQLGLQTVIRGNSIISLEALDAI</sequence>
<reference key="1">
    <citation type="journal article" date="1988" name="J. Gen. Microbiol.">
        <title>The nucleotide sequence of the LPD1 gene encoding lipoamide dehydrogenase in Saccharomyces cerevisiae: comparison between eukaryotic and prokaryotic sequences for related enzymes and identification of potential upstream control sites.</title>
        <authorList>
            <person name="Ross J."/>
            <person name="Reid G.A."/>
            <person name="Dawes I.W."/>
        </authorList>
    </citation>
    <scope>NUCLEOTIDE SEQUENCE [GENOMIC DNA]</scope>
</reference>
<reference key="2">
    <citation type="submission" date="1995-06" db="EMBL/GenBank/DDBJ databases">
        <authorList>
            <person name="Kornfeld G.D."/>
        </authorList>
    </citation>
    <scope>NUCLEOTIDE SEQUENCE [GENOMIC DNA]</scope>
</reference>
<reference key="3">
    <citation type="journal article" date="1998" name="Mol. Cell. Biol.">
        <title>Interactions within the yeast Sm core complex: from proteins to amino acids.</title>
        <authorList>
            <person name="Camasses A."/>
            <person name="Bragado-Nilsson E."/>
            <person name="Martin R."/>
            <person name="Seraphin B."/>
            <person name="Bordonne R."/>
        </authorList>
    </citation>
    <scope>NUCLEOTIDE SEQUENCE [GENOMIC DNA]</scope>
    <scope>INTERACTION WITH SME1</scope>
</reference>
<reference key="4">
    <citation type="journal article" date="1995" name="Nat. Genet.">
        <title>Analysis of the nucleotide sequence of chromosome VI from Saccharomyces cerevisiae.</title>
        <authorList>
            <person name="Murakami Y."/>
            <person name="Naitou M."/>
            <person name="Hagiwara H."/>
            <person name="Shibata T."/>
            <person name="Ozawa M."/>
            <person name="Sasanuma S."/>
            <person name="Sasanuma M."/>
            <person name="Tsuchiya Y."/>
            <person name="Soeda E."/>
            <person name="Yokoyama K."/>
            <person name="Yamazaki M."/>
            <person name="Tashiro H."/>
            <person name="Eki T."/>
        </authorList>
    </citation>
    <scope>NUCLEOTIDE SEQUENCE [LARGE SCALE GENOMIC DNA]</scope>
    <source>
        <strain>ATCC 204508 / S288c</strain>
    </source>
</reference>
<reference key="5">
    <citation type="journal article" date="2014" name="G3 (Bethesda)">
        <title>The reference genome sequence of Saccharomyces cerevisiae: Then and now.</title>
        <authorList>
            <person name="Engel S.R."/>
            <person name="Dietrich F.S."/>
            <person name="Fisk D.G."/>
            <person name="Binkley G."/>
            <person name="Balakrishnan R."/>
            <person name="Costanzo M.C."/>
            <person name="Dwight S.S."/>
            <person name="Hitz B.C."/>
            <person name="Karra K."/>
            <person name="Nash R.S."/>
            <person name="Weng S."/>
            <person name="Wong E.D."/>
            <person name="Lloyd P."/>
            <person name="Skrzypek M.S."/>
            <person name="Miyasato S.R."/>
            <person name="Simison M."/>
            <person name="Cherry J.M."/>
        </authorList>
    </citation>
    <scope>GENOME REANNOTATION</scope>
    <source>
        <strain>ATCC 204508 / S288c</strain>
    </source>
</reference>
<reference key="6">
    <citation type="submission" date="1994-09" db="EMBL/GenBank/DDBJ databases">
        <authorList>
            <person name="Barrell B.G."/>
            <person name="Churcher C."/>
            <person name="Rajandream M.A."/>
        </authorList>
    </citation>
    <scope>NUCLEOTIDE SEQUENCE [GENOMIC DNA]</scope>
    <source>
        <strain>ATCC 204511 / S288c / AB972</strain>
    </source>
</reference>
<reference key="7">
    <citation type="journal article" date="2007" name="Genome Res.">
        <title>Approaching a complete repository of sequence-verified protein-encoding clones for Saccharomyces cerevisiae.</title>
        <authorList>
            <person name="Hu Y."/>
            <person name="Rolfs A."/>
            <person name="Bhullar B."/>
            <person name="Murthy T.V.S."/>
            <person name="Zhu C."/>
            <person name="Berger M.F."/>
            <person name="Camargo A.A."/>
            <person name="Kelley F."/>
            <person name="McCarron S."/>
            <person name="Jepson D."/>
            <person name="Richardson A."/>
            <person name="Raphael J."/>
            <person name="Moreira D."/>
            <person name="Taycher E."/>
            <person name="Zuo D."/>
            <person name="Mohr S."/>
            <person name="Kane M.F."/>
            <person name="Williamson J."/>
            <person name="Simpson A.J.G."/>
            <person name="Bulyk M.L."/>
            <person name="Harlow E."/>
            <person name="Marsischky G."/>
            <person name="Kolodner R.D."/>
            <person name="LaBaer J."/>
        </authorList>
    </citation>
    <scope>NUCLEOTIDE SEQUENCE [GENOMIC DNA]</scope>
    <source>
        <strain>ATCC 204508 / S288c</strain>
    </source>
</reference>
<reference key="8">
    <citation type="journal article" date="1997" name="Proc. Natl. Acad. Sci. U.S.A.">
        <title>Identification of the proteins of the yeast U1 small nuclear ribonucleoprotein complex by mass spectrometry.</title>
        <authorList>
            <person name="Neubauer G."/>
            <person name="Gottschalk A."/>
            <person name="Fabrizio P."/>
            <person name="Seraphin B."/>
            <person name="Luehrmann R."/>
            <person name="Mann M."/>
        </authorList>
    </citation>
    <scope>PARTIAL PROTEIN SEQUENCE</scope>
</reference>
<reference key="9">
    <citation type="journal article" date="1999" name="EMBO J.">
        <title>Sm and Sm-like proteins assemble in two related complexes of deep evolutionary origin.</title>
        <authorList>
            <person name="Salgado-Garrido J."/>
            <person name="Bragado-Nilsson E."/>
            <person name="Kandels-Lewis S."/>
            <person name="Seraphin B."/>
        </authorList>
    </citation>
    <scope>RNA-BINDING</scope>
</reference>
<reference key="10">
    <citation type="journal article" date="1999" name="EMBO J.">
        <title>Identification by mass spectrometry and functional analysis of novel proteins of the yeast [U4/U6.U5] tri-snRNP.</title>
        <authorList>
            <person name="Gottschalk A."/>
            <person name="Neubauer G."/>
            <person name="Banroques J."/>
            <person name="Mann M."/>
            <person name="Luehrmann R."/>
            <person name="Fabrizio P."/>
        </authorList>
    </citation>
    <scope>SUBUNIT</scope>
    <scope>IDENTIFICATION IN THE U4/U5/U6 TRI-SNRNP COMPLEX</scope>
    <scope>IDENTIFICATION BY MASS SPECTROMETRY</scope>
</reference>
<reference key="11">
    <citation type="journal article" date="2001" name="J. Mol. Biol.">
        <title>Stoichiometry of the Sm proteins in yeast spliceosomal snRNPs supports the heptamer ring model of the core domain.</title>
        <authorList>
            <person name="Walke S."/>
            <person name="Bragado-Nilsson E."/>
            <person name="Seraphin B."/>
            <person name="Nagai K."/>
        </authorList>
    </citation>
    <scope>SUBUNIT</scope>
</reference>
<reference key="12">
    <citation type="journal article" date="2002" name="Mol. Cell">
        <title>Composition and functional characterization of the yeast spliceosomal penta-snRNP.</title>
        <authorList>
            <person name="Stevens S.W."/>
            <person name="Ryan D.E."/>
            <person name="Ge H.Y."/>
            <person name="Moore R.E."/>
            <person name="Young M.K."/>
            <person name="Lee T.D."/>
            <person name="Abelson J."/>
        </authorList>
    </citation>
    <scope>CHARACTERIZATION OF THE SPLICEOSOME</scope>
</reference>
<reference key="13">
    <citation type="journal article" date="2002" name="Mol. Cell. Biol.">
        <title>Proteomics analysis reveals stable multiprotein complexes in both fission and budding yeasts containing Myb-related Cdc5p/Cef1p, novel pre-mRNA splicing factors, and snRNAs.</title>
        <authorList>
            <person name="Ohi M.D."/>
            <person name="Link A.J."/>
            <person name="Ren L."/>
            <person name="Jennings J.L."/>
            <person name="McDonald W.H."/>
            <person name="Gould K.L."/>
        </authorList>
    </citation>
    <scope>IDENTIFICATION IN THE CWC COMPLEX</scope>
    <scope>IDENTIFICATION BY MASS SPECTROMETRY</scope>
</reference>
<reference key="14">
    <citation type="journal article" date="2003" name="Nature">
        <title>Global analysis of protein expression in yeast.</title>
        <authorList>
            <person name="Ghaemmaghami S."/>
            <person name="Huh W.-K."/>
            <person name="Bower K."/>
            <person name="Howson R.W."/>
            <person name="Belle A."/>
            <person name="Dephoure N."/>
            <person name="O'Shea E.K."/>
            <person name="Weissman J.S."/>
        </authorList>
    </citation>
    <scope>LEVEL OF PROTEIN EXPRESSION [LARGE SCALE ANALYSIS]</scope>
</reference>
<name>RUXG_YEAST</name>
<feature type="chain" id="PRO_0000125552" description="Small nuclear ribonucleoprotein G">
    <location>
        <begin position="1"/>
        <end position="77"/>
    </location>
</feature>
<feature type="domain" description="Sm" evidence="3">
    <location>
        <begin position="2"/>
        <end position="77"/>
    </location>
</feature>
<feature type="helix" evidence="10">
    <location>
        <begin position="7"/>
        <end position="10"/>
    </location>
</feature>
<feature type="strand" evidence="10">
    <location>
        <begin position="13"/>
        <end position="19"/>
    </location>
</feature>
<feature type="turn" evidence="10">
    <location>
        <begin position="20"/>
        <end position="22"/>
    </location>
</feature>
<feature type="strand" evidence="10">
    <location>
        <begin position="23"/>
        <end position="32"/>
    </location>
</feature>
<feature type="strand" evidence="10">
    <location>
        <begin position="38"/>
        <end position="46"/>
    </location>
</feature>
<feature type="helix" evidence="10">
    <location>
        <begin position="51"/>
        <end position="53"/>
    </location>
</feature>
<feature type="strand" evidence="10">
    <location>
        <begin position="55"/>
        <end position="63"/>
    </location>
</feature>
<feature type="helix" evidence="10">
    <location>
        <begin position="65"/>
        <end position="67"/>
    </location>
</feature>
<feature type="strand" evidence="10">
    <location>
        <begin position="68"/>
        <end position="73"/>
    </location>
</feature>
<gene>
    <name type="primary">SMX2</name>
    <name type="synonym">SNP2</name>
    <name type="ordered locus">YFL017W-A</name>
    <name type="ORF">YFL017Bw</name>
</gene>
<comment type="function">
    <text evidence="2">Plays a role in pre-mRNA splicing as a core component of the spliceosomal U1, U2, U4 and U5 small nuclear ribonucleoproteins (snRNPs), the building blocks of the spliceosome (By similarity).</text>
</comment>
<comment type="subunit">
    <text evidence="4 5 6 8">Component of the Sm core complex, present in spliceosomal snRNP U1, U2, U4/U6 and U5. The core complex contains SMB1, SMD1, SMD2, SMD3, SME1, SMX3 and SMX2 (Sm proteins B, D1, D2, D3, E, F and G, respectively), and is probably a heptameric ring structure. SMX2 specifically interacts with SME1. Belongs to the CWC complex (or CEF1-associated complex), a spliceosome sub-complex reminiscent of a late-stage spliceosome composed of the U2, U5 and U6 snRNAs and at least BUD13, BUD31, BRR2, CDC40, CEF1, CLF1, CUS1, CWC2, CWC15, CWC21, CWC22, CWC23, CWC24, CWC25, CWC27, ECM2, HSH155, IST3, ISY1, LEA1, MSL1, NTC20, PRP8, PRP9, PRP11, PRP19, PRP21, PRP22, PRP45, PRP46, SLU7, SMB1, SMD1, SMD2, SMD3, SMX2, SMX3, SNT309, SNU114, SPP2, SYF1, SYF2, RSE1 and YJU2. Component of the U4/U6-U5 tri-snRNP complex composed of the U4, U6 and U5 snRNAs and at least PRP3, PRP4, PRP6, PRP8, PRP18, PRP31, PRP38, SNU13, SNU23, SNU66, SNU114, SPP381, SMB1, SMD1, SMD2, SMD3, SMX2, SMX3, LSM2, LSM3, LSM4, LSM5, LSM6, LSM7, LSM8, BRR2 and DIB1.</text>
</comment>
<comment type="interaction">
    <interactant intactId="EBI-637">
        <id>P40204</id>
    </interactant>
    <interactant intactId="EBI-16359">
        <id>Q12330</id>
        <label>SME1</label>
    </interactant>
    <organismsDiffer>false</organismsDiffer>
    <experiments>6</experiments>
</comment>
<comment type="subcellular location">
    <subcellularLocation>
        <location evidence="1">Nucleus</location>
    </subcellularLocation>
    <subcellularLocation>
        <location evidence="1">Cytoplasm</location>
    </subcellularLocation>
</comment>
<comment type="miscellaneous">
    <text evidence="7">Present with 1400 molecules/cell in log phase SD medium.</text>
</comment>
<comment type="similarity">
    <text evidence="9">Belongs to the snRNP Sm proteins family.</text>
</comment>